<sequence length="276" mass="30347">MKISKTKTPKLVLIAGPCVIESLDNLRGIAIKLQPLANNERLDFYFKASFDKANRTSLESYRGPGLEKGLEMLQAIKDEFGYKILTDVHESYQVSIAVKVADILQIPAFLCRQTDLIVEVSQTNAIINIKKGQFMSPKDMQYSVLKALKTRDKNIQNPTYENALANGVWLCERGSSFGYGNLVVDMRSLKIMREFAPVIFDATHSVQMPGGANGKSSGESSFAPILARAAAAVGVDGLFAETHIDPKNALSDGANMLKPNELESLVTDMLKIQNLF</sequence>
<protein>
    <recommendedName>
        <fullName evidence="1">2-dehydro-3-deoxyphosphooctonate aldolase</fullName>
        <ecNumber evidence="1">2.5.1.55</ecNumber>
    </recommendedName>
    <alternativeName>
        <fullName evidence="1">3-deoxy-D-manno-octulosonic acid 8-phosphate synthase</fullName>
    </alternativeName>
    <alternativeName>
        <fullName evidence="1">KDO-8-phosphate synthase</fullName>
        <shortName evidence="1">KDO 8-P synthase</shortName>
        <shortName evidence="1">KDOPS</shortName>
    </alternativeName>
    <alternativeName>
        <fullName evidence="1">Phospho-2-dehydro-3-deoxyoctonate aldolase</fullName>
    </alternativeName>
</protein>
<keyword id="KW-0963">Cytoplasm</keyword>
<keyword id="KW-0448">Lipopolysaccharide biosynthesis</keyword>
<keyword id="KW-0808">Transferase</keyword>
<organism>
    <name type="scientific">Helicobacter acinonychis (strain Sheeba)</name>
    <dbReference type="NCBI Taxonomy" id="382638"/>
    <lineage>
        <taxon>Bacteria</taxon>
        <taxon>Pseudomonadati</taxon>
        <taxon>Campylobacterota</taxon>
        <taxon>Epsilonproteobacteria</taxon>
        <taxon>Campylobacterales</taxon>
        <taxon>Helicobacteraceae</taxon>
        <taxon>Helicobacter</taxon>
    </lineage>
</organism>
<proteinExistence type="inferred from homology"/>
<feature type="chain" id="PRO_0000304455" description="2-dehydro-3-deoxyphosphooctonate aldolase">
    <location>
        <begin position="1"/>
        <end position="276"/>
    </location>
</feature>
<name>KDSA_HELAH</name>
<reference key="1">
    <citation type="journal article" date="2006" name="PLoS Genet.">
        <title>Who ate whom? Adaptive Helicobacter genomic changes that accompanied a host jump from early humans to large felines.</title>
        <authorList>
            <person name="Eppinger M."/>
            <person name="Baar C."/>
            <person name="Linz B."/>
            <person name="Raddatz G."/>
            <person name="Lanz C."/>
            <person name="Keller H."/>
            <person name="Morelli G."/>
            <person name="Gressmann H."/>
            <person name="Achtman M."/>
            <person name="Schuster S.C."/>
        </authorList>
    </citation>
    <scope>NUCLEOTIDE SEQUENCE [LARGE SCALE GENOMIC DNA]</scope>
    <source>
        <strain>Sheeba</strain>
    </source>
</reference>
<gene>
    <name evidence="1" type="primary">kdsA</name>
    <name type="ordered locus">Hac_0256</name>
</gene>
<dbReference type="EC" id="2.5.1.55" evidence="1"/>
<dbReference type="EMBL" id="AM260522">
    <property type="protein sequence ID" value="CAJ99102.1"/>
    <property type="molecule type" value="Genomic_DNA"/>
</dbReference>
<dbReference type="RefSeq" id="WP_011577217.1">
    <property type="nucleotide sequence ID" value="NC_008229.1"/>
</dbReference>
<dbReference type="SMR" id="Q17Z24"/>
<dbReference type="STRING" id="382638.Hac_0256"/>
<dbReference type="GeneID" id="31757769"/>
<dbReference type="KEGG" id="hac:Hac_0256"/>
<dbReference type="eggNOG" id="COG2877">
    <property type="taxonomic scope" value="Bacteria"/>
</dbReference>
<dbReference type="HOGENOM" id="CLU_036666_0_0_7"/>
<dbReference type="OrthoDB" id="9802281at2"/>
<dbReference type="BioCyc" id="HACI382638:HAC_RS01115-MONOMER"/>
<dbReference type="UniPathway" id="UPA00030"/>
<dbReference type="UniPathway" id="UPA00357">
    <property type="reaction ID" value="UER00474"/>
</dbReference>
<dbReference type="Proteomes" id="UP000000775">
    <property type="component" value="Chromosome"/>
</dbReference>
<dbReference type="GO" id="GO:0005737">
    <property type="term" value="C:cytoplasm"/>
    <property type="evidence" value="ECO:0007669"/>
    <property type="project" value="UniProtKB-SubCell"/>
</dbReference>
<dbReference type="GO" id="GO:0008676">
    <property type="term" value="F:3-deoxy-8-phosphooctulonate synthase activity"/>
    <property type="evidence" value="ECO:0007669"/>
    <property type="project" value="UniProtKB-UniRule"/>
</dbReference>
<dbReference type="GO" id="GO:0019294">
    <property type="term" value="P:keto-3-deoxy-D-manno-octulosonic acid biosynthetic process"/>
    <property type="evidence" value="ECO:0007669"/>
    <property type="project" value="UniProtKB-UniRule"/>
</dbReference>
<dbReference type="Gene3D" id="3.20.20.70">
    <property type="entry name" value="Aldolase class I"/>
    <property type="match status" value="1"/>
</dbReference>
<dbReference type="HAMAP" id="MF_00056">
    <property type="entry name" value="KDO8P_synth"/>
    <property type="match status" value="1"/>
</dbReference>
<dbReference type="InterPro" id="IPR013785">
    <property type="entry name" value="Aldolase_TIM"/>
</dbReference>
<dbReference type="InterPro" id="IPR006218">
    <property type="entry name" value="DAHP1/KDSA"/>
</dbReference>
<dbReference type="InterPro" id="IPR006269">
    <property type="entry name" value="KDO8P_synthase"/>
</dbReference>
<dbReference type="NCBIfam" id="TIGR01362">
    <property type="entry name" value="KDO8P_synth"/>
    <property type="match status" value="1"/>
</dbReference>
<dbReference type="NCBIfam" id="NF003543">
    <property type="entry name" value="PRK05198.1"/>
    <property type="match status" value="1"/>
</dbReference>
<dbReference type="PANTHER" id="PTHR21057">
    <property type="entry name" value="PHOSPHO-2-DEHYDRO-3-DEOXYHEPTONATE ALDOLASE"/>
    <property type="match status" value="1"/>
</dbReference>
<dbReference type="Pfam" id="PF00793">
    <property type="entry name" value="DAHP_synth_1"/>
    <property type="match status" value="1"/>
</dbReference>
<dbReference type="SUPFAM" id="SSF51569">
    <property type="entry name" value="Aldolase"/>
    <property type="match status" value="1"/>
</dbReference>
<evidence type="ECO:0000255" key="1">
    <source>
        <dbReference type="HAMAP-Rule" id="MF_00056"/>
    </source>
</evidence>
<accession>Q17Z24</accession>
<comment type="catalytic activity">
    <reaction evidence="1">
        <text>D-arabinose 5-phosphate + phosphoenolpyruvate + H2O = 3-deoxy-alpha-D-manno-2-octulosonate-8-phosphate + phosphate</text>
        <dbReference type="Rhea" id="RHEA:14053"/>
        <dbReference type="ChEBI" id="CHEBI:15377"/>
        <dbReference type="ChEBI" id="CHEBI:43474"/>
        <dbReference type="ChEBI" id="CHEBI:57693"/>
        <dbReference type="ChEBI" id="CHEBI:58702"/>
        <dbReference type="ChEBI" id="CHEBI:85985"/>
        <dbReference type="EC" id="2.5.1.55"/>
    </reaction>
</comment>
<comment type="pathway">
    <text evidence="1">Carbohydrate biosynthesis; 3-deoxy-D-manno-octulosonate biosynthesis; 3-deoxy-D-manno-octulosonate from D-ribulose 5-phosphate: step 2/3.</text>
</comment>
<comment type="pathway">
    <text evidence="1">Bacterial outer membrane biogenesis; lipopolysaccharide biosynthesis.</text>
</comment>
<comment type="subcellular location">
    <subcellularLocation>
        <location evidence="1">Cytoplasm</location>
    </subcellularLocation>
</comment>
<comment type="similarity">
    <text evidence="1">Belongs to the KdsA family.</text>
</comment>